<evidence type="ECO:0000250" key="1">
    <source>
        <dbReference type="UniProtKB" id="Q9XI46"/>
    </source>
</evidence>
<evidence type="ECO:0000255" key="2"/>
<evidence type="ECO:0000305" key="3"/>
<evidence type="ECO:0000312" key="4">
    <source>
        <dbReference type="EMBL" id="BAD21809.1"/>
    </source>
</evidence>
<evidence type="ECO:0000312" key="5">
    <source>
        <dbReference type="EMBL" id="BAD21845.1"/>
    </source>
</evidence>
<evidence type="ECO:0000312" key="6">
    <source>
        <dbReference type="EMBL" id="BAF08453.1"/>
    </source>
</evidence>
<evidence type="ECO:0000312" key="7">
    <source>
        <dbReference type="EMBL" id="EEE56726.1"/>
    </source>
</evidence>
<proteinExistence type="evidence at transcript level"/>
<organism>
    <name type="scientific">Oryza sativa subsp. japonica</name>
    <name type="common">Rice</name>
    <dbReference type="NCBI Taxonomy" id="39947"/>
    <lineage>
        <taxon>Eukaryota</taxon>
        <taxon>Viridiplantae</taxon>
        <taxon>Streptophyta</taxon>
        <taxon>Embryophyta</taxon>
        <taxon>Tracheophyta</taxon>
        <taxon>Spermatophyta</taxon>
        <taxon>Magnoliopsida</taxon>
        <taxon>Liliopsida</taxon>
        <taxon>Poales</taxon>
        <taxon>Poaceae</taxon>
        <taxon>BOP clade</taxon>
        <taxon>Oryzoideae</taxon>
        <taxon>Oryzeae</taxon>
        <taxon>Oryzinae</taxon>
        <taxon>Oryza</taxon>
        <taxon>Oryza sativa</taxon>
    </lineage>
</organism>
<dbReference type="EMBL" id="AP004770">
    <property type="protein sequence ID" value="BAD21809.1"/>
    <property type="molecule type" value="Genomic_DNA"/>
</dbReference>
<dbReference type="EMBL" id="AP004771">
    <property type="protein sequence ID" value="BAD21845.1"/>
    <property type="molecule type" value="Genomic_DNA"/>
</dbReference>
<dbReference type="EMBL" id="AP008208">
    <property type="protein sequence ID" value="BAF08453.1"/>
    <property type="molecule type" value="Genomic_DNA"/>
</dbReference>
<dbReference type="EMBL" id="AP014958">
    <property type="protein sequence ID" value="BAS78087.1"/>
    <property type="molecule type" value="Genomic_DNA"/>
</dbReference>
<dbReference type="EMBL" id="CM000139">
    <property type="protein sequence ID" value="EEE56726.1"/>
    <property type="molecule type" value="Genomic_DNA"/>
</dbReference>
<dbReference type="EMBL" id="AK242385">
    <property type="protein sequence ID" value="BAH01276.1"/>
    <property type="molecule type" value="mRNA"/>
</dbReference>
<dbReference type="RefSeq" id="XP_015625330.1">
    <property type="nucleotide sequence ID" value="XM_015769844.1"/>
</dbReference>
<dbReference type="RefSeq" id="XP_015625331.1">
    <property type="nucleotide sequence ID" value="XM_015769845.1"/>
</dbReference>
<dbReference type="SMR" id="Q6K7S7"/>
<dbReference type="FunCoup" id="Q6K7S7">
    <property type="interactions" value="6"/>
</dbReference>
<dbReference type="STRING" id="39947.Q6K7S7"/>
<dbReference type="PaxDb" id="39947-Q6K7S7"/>
<dbReference type="EnsemblPlants" id="Os02t0275100-01">
    <property type="protein sequence ID" value="Os02t0275100-01"/>
    <property type="gene ID" value="Os02g0275100"/>
</dbReference>
<dbReference type="Gramene" id="Os02t0275100-01">
    <property type="protein sequence ID" value="Os02t0275100-01"/>
    <property type="gene ID" value="Os02g0275100"/>
</dbReference>
<dbReference type="KEGG" id="dosa:Os02g0275100"/>
<dbReference type="eggNOG" id="ENOG502RXFW">
    <property type="taxonomic scope" value="Eukaryota"/>
</dbReference>
<dbReference type="HOGENOM" id="CLU_107187_1_0_1"/>
<dbReference type="InParanoid" id="Q6K7S7"/>
<dbReference type="OMA" id="AGIWAYN"/>
<dbReference type="OrthoDB" id="2020000at2759"/>
<dbReference type="Proteomes" id="UP000000763">
    <property type="component" value="Chromosome 2"/>
</dbReference>
<dbReference type="Proteomes" id="UP000007752">
    <property type="component" value="Chromosome 2"/>
</dbReference>
<dbReference type="Proteomes" id="UP000059680">
    <property type="component" value="Chromosome 2"/>
</dbReference>
<dbReference type="GO" id="GO:0005743">
    <property type="term" value="C:mitochondrial inner membrane"/>
    <property type="evidence" value="ECO:0007669"/>
    <property type="project" value="UniProtKB-SubCell"/>
</dbReference>
<dbReference type="GO" id="GO:0032991">
    <property type="term" value="C:protein-containing complex"/>
    <property type="evidence" value="ECO:0007669"/>
    <property type="project" value="EnsemblPlants"/>
</dbReference>
<dbReference type="GO" id="GO:0046872">
    <property type="term" value="F:metal ion binding"/>
    <property type="evidence" value="ECO:0007669"/>
    <property type="project" value="UniProtKB-KW"/>
</dbReference>
<dbReference type="GO" id="GO:0016491">
    <property type="term" value="F:oxidoreductase activity"/>
    <property type="evidence" value="ECO:0007669"/>
    <property type="project" value="EnsemblPlants"/>
</dbReference>
<dbReference type="GO" id="GO:0017004">
    <property type="term" value="P:cytochrome complex assembly"/>
    <property type="evidence" value="ECO:0007669"/>
    <property type="project" value="UniProtKB-KW"/>
</dbReference>
<dbReference type="GO" id="GO:0009793">
    <property type="term" value="P:embryo development ending in seed dormancy"/>
    <property type="evidence" value="ECO:0007669"/>
    <property type="project" value="EnsemblPlants"/>
</dbReference>
<dbReference type="CDD" id="cd16378">
    <property type="entry name" value="CcmH_N"/>
    <property type="match status" value="1"/>
</dbReference>
<dbReference type="FunFam" id="1.10.8.640:FF:000001">
    <property type="entry name" value="Cytochrome c-type biogenesis protein"/>
    <property type="match status" value="1"/>
</dbReference>
<dbReference type="Gene3D" id="1.10.8.640">
    <property type="entry name" value="Cytochrome C biogenesis protein"/>
    <property type="match status" value="1"/>
</dbReference>
<dbReference type="InterPro" id="IPR005616">
    <property type="entry name" value="CcmH/CycL/Ccl2/NrfF_N"/>
</dbReference>
<dbReference type="InterPro" id="IPR038297">
    <property type="entry name" value="CcmH/CycL/NrfF/Ccl2_sf"/>
</dbReference>
<dbReference type="PANTHER" id="PTHR47601">
    <property type="match status" value="1"/>
</dbReference>
<dbReference type="PANTHER" id="PTHR47601:SF1">
    <property type="entry name" value="CYTOCHROME C-TYPE BIOGENESIS CCMH-LIKE MITOCHONDRIAL PROTEIN"/>
    <property type="match status" value="1"/>
</dbReference>
<dbReference type="Pfam" id="PF03918">
    <property type="entry name" value="CcmH"/>
    <property type="match status" value="1"/>
</dbReference>
<comment type="function">
    <text evidence="1">Plays a role in mitochondrial cytochrome c maturation. Probable component of a heme lyase complex involved in the reduction of apocytochrome c.</text>
</comment>
<comment type="subcellular location">
    <subcellularLocation>
        <location evidence="1">Mitochondrion inner membrane</location>
        <topology evidence="2">Single-pass membrane protein</topology>
    </subcellularLocation>
</comment>
<comment type="similarity">
    <text evidence="3">Belongs to the CcmH/CycL/Ccl2/NrfF family.</text>
</comment>
<name>CCMH_ORYSJ</name>
<sequence>MATEEDVKQRQIIESRARNISHNVRCTECGSQSIEDSQADIAILLRKLIRDEIKSGKSDKEIYKKLQADYGETILYTPKFDLQTAAIWLSPVIVGGVAAGVWAYQKHRQRTNVHIMALNLVRGVPLTPREKETMLDVLTPPPPANKWWWPGK</sequence>
<gene>
    <name evidence="3" type="primary">CCMH</name>
    <name evidence="6" type="ordered locus">Os02g0275100</name>
    <name evidence="3" type="ordered locus">LOC_Os02g17520</name>
    <name evidence="7" type="ORF">OsJ_06229</name>
    <name evidence="4" type="ORF">P0017G06.11</name>
    <name evidence="5" type="ORF">P0413A11.41</name>
</gene>
<keyword id="KW-0201">Cytochrome c-type biogenesis</keyword>
<keyword id="KW-0349">Heme</keyword>
<keyword id="KW-0408">Iron</keyword>
<keyword id="KW-0472">Membrane</keyword>
<keyword id="KW-0479">Metal-binding</keyword>
<keyword id="KW-0496">Mitochondrion</keyword>
<keyword id="KW-0999">Mitochondrion inner membrane</keyword>
<keyword id="KW-1185">Reference proteome</keyword>
<keyword id="KW-0812">Transmembrane</keyword>
<keyword id="KW-1133">Transmembrane helix</keyword>
<feature type="chain" id="PRO_0000432847" description="Cytochrome c-type biogenesis CcmH-like mitochondrial protein">
    <location>
        <begin position="1"/>
        <end position="152"/>
    </location>
</feature>
<feature type="topological domain" description="Mitochondrial intermembrane" evidence="1">
    <location>
        <begin position="1"/>
        <end position="83"/>
    </location>
</feature>
<feature type="transmembrane region" description="Helical" evidence="2">
    <location>
        <begin position="84"/>
        <end position="104"/>
    </location>
</feature>
<feature type="topological domain" description="Mitochondrial matrix" evidence="1">
    <location>
        <begin position="105"/>
        <end position="152"/>
    </location>
</feature>
<feature type="binding site" description="covalent" evidence="1">
    <location>
        <position position="26"/>
    </location>
    <ligand>
        <name>heme</name>
        <dbReference type="ChEBI" id="CHEBI:30413"/>
    </ligand>
</feature>
<feature type="binding site" description="covalent" evidence="1">
    <location>
        <position position="29"/>
    </location>
    <ligand>
        <name>heme</name>
        <dbReference type="ChEBI" id="CHEBI:30413"/>
    </ligand>
</feature>
<protein>
    <recommendedName>
        <fullName evidence="3">Cytochrome c-type biogenesis CcmH-like mitochondrial protein</fullName>
        <shortName evidence="3">OsCCMH</shortName>
    </recommendedName>
</protein>
<accession>Q6K7S7</accession>
<accession>A0A0P0VHM5</accession>
<reference key="1">
    <citation type="journal article" date="2005" name="Nature">
        <title>The map-based sequence of the rice genome.</title>
        <authorList>
            <consortium name="International rice genome sequencing project (IRGSP)"/>
        </authorList>
    </citation>
    <scope>NUCLEOTIDE SEQUENCE [LARGE SCALE GENOMIC DNA]</scope>
    <source>
        <strain>cv. Nipponbare</strain>
    </source>
</reference>
<reference key="2">
    <citation type="journal article" date="2008" name="Nucleic Acids Res.">
        <title>The rice annotation project database (RAP-DB): 2008 update.</title>
        <authorList>
            <consortium name="The rice annotation project (RAP)"/>
        </authorList>
    </citation>
    <scope>GENOME REANNOTATION</scope>
    <source>
        <strain>cv. Nipponbare</strain>
    </source>
</reference>
<reference key="3">
    <citation type="journal article" date="2013" name="Rice">
        <title>Improvement of the Oryza sativa Nipponbare reference genome using next generation sequence and optical map data.</title>
        <authorList>
            <person name="Kawahara Y."/>
            <person name="de la Bastide M."/>
            <person name="Hamilton J.P."/>
            <person name="Kanamori H."/>
            <person name="McCombie W.R."/>
            <person name="Ouyang S."/>
            <person name="Schwartz D.C."/>
            <person name="Tanaka T."/>
            <person name="Wu J."/>
            <person name="Zhou S."/>
            <person name="Childs K.L."/>
            <person name="Davidson R.M."/>
            <person name="Lin H."/>
            <person name="Quesada-Ocampo L."/>
            <person name="Vaillancourt B."/>
            <person name="Sakai H."/>
            <person name="Lee S.S."/>
            <person name="Kim J."/>
            <person name="Numa H."/>
            <person name="Itoh T."/>
            <person name="Buell C.R."/>
            <person name="Matsumoto T."/>
        </authorList>
    </citation>
    <scope>GENOME REANNOTATION</scope>
    <source>
        <strain>cv. Nipponbare</strain>
    </source>
</reference>
<reference key="4">
    <citation type="journal article" date="2005" name="PLoS Biol.">
        <title>The genomes of Oryza sativa: a history of duplications.</title>
        <authorList>
            <person name="Yu J."/>
            <person name="Wang J."/>
            <person name="Lin W."/>
            <person name="Li S."/>
            <person name="Li H."/>
            <person name="Zhou J."/>
            <person name="Ni P."/>
            <person name="Dong W."/>
            <person name="Hu S."/>
            <person name="Zeng C."/>
            <person name="Zhang J."/>
            <person name="Zhang Y."/>
            <person name="Li R."/>
            <person name="Xu Z."/>
            <person name="Li S."/>
            <person name="Li X."/>
            <person name="Zheng H."/>
            <person name="Cong L."/>
            <person name="Lin L."/>
            <person name="Yin J."/>
            <person name="Geng J."/>
            <person name="Li G."/>
            <person name="Shi J."/>
            <person name="Liu J."/>
            <person name="Lv H."/>
            <person name="Li J."/>
            <person name="Wang J."/>
            <person name="Deng Y."/>
            <person name="Ran L."/>
            <person name="Shi X."/>
            <person name="Wang X."/>
            <person name="Wu Q."/>
            <person name="Li C."/>
            <person name="Ren X."/>
            <person name="Wang J."/>
            <person name="Wang X."/>
            <person name="Li D."/>
            <person name="Liu D."/>
            <person name="Zhang X."/>
            <person name="Ji Z."/>
            <person name="Zhao W."/>
            <person name="Sun Y."/>
            <person name="Zhang Z."/>
            <person name="Bao J."/>
            <person name="Han Y."/>
            <person name="Dong L."/>
            <person name="Ji J."/>
            <person name="Chen P."/>
            <person name="Wu S."/>
            <person name="Liu J."/>
            <person name="Xiao Y."/>
            <person name="Bu D."/>
            <person name="Tan J."/>
            <person name="Yang L."/>
            <person name="Ye C."/>
            <person name="Zhang J."/>
            <person name="Xu J."/>
            <person name="Zhou Y."/>
            <person name="Yu Y."/>
            <person name="Zhang B."/>
            <person name="Zhuang S."/>
            <person name="Wei H."/>
            <person name="Liu B."/>
            <person name="Lei M."/>
            <person name="Yu H."/>
            <person name="Li Y."/>
            <person name="Xu H."/>
            <person name="Wei S."/>
            <person name="He X."/>
            <person name="Fang L."/>
            <person name="Zhang Z."/>
            <person name="Zhang Y."/>
            <person name="Huang X."/>
            <person name="Su Z."/>
            <person name="Tong W."/>
            <person name="Li J."/>
            <person name="Tong Z."/>
            <person name="Li S."/>
            <person name="Ye J."/>
            <person name="Wang L."/>
            <person name="Fang L."/>
            <person name="Lei T."/>
            <person name="Chen C.-S."/>
            <person name="Chen H.-C."/>
            <person name="Xu Z."/>
            <person name="Li H."/>
            <person name="Huang H."/>
            <person name="Zhang F."/>
            <person name="Xu H."/>
            <person name="Li N."/>
            <person name="Zhao C."/>
            <person name="Li S."/>
            <person name="Dong L."/>
            <person name="Huang Y."/>
            <person name="Li L."/>
            <person name="Xi Y."/>
            <person name="Qi Q."/>
            <person name="Li W."/>
            <person name="Zhang B."/>
            <person name="Hu W."/>
            <person name="Zhang Y."/>
            <person name="Tian X."/>
            <person name="Jiao Y."/>
            <person name="Liang X."/>
            <person name="Jin J."/>
            <person name="Gao L."/>
            <person name="Zheng W."/>
            <person name="Hao B."/>
            <person name="Liu S.-M."/>
            <person name="Wang W."/>
            <person name="Yuan L."/>
            <person name="Cao M."/>
            <person name="McDermott J."/>
            <person name="Samudrala R."/>
            <person name="Wang J."/>
            <person name="Wong G.K.-S."/>
            <person name="Yang H."/>
        </authorList>
    </citation>
    <scope>NUCLEOTIDE SEQUENCE [LARGE SCALE GENOMIC DNA]</scope>
    <source>
        <strain>cv. Nipponbare</strain>
    </source>
</reference>
<reference key="5">
    <citation type="submission" date="2006-10" db="EMBL/GenBank/DDBJ databases">
        <title>Oryza sativa full length cDNA.</title>
        <authorList>
            <consortium name="The rice full-length cDNA consortium"/>
        </authorList>
    </citation>
    <scope>NUCLEOTIDE SEQUENCE [LARGE SCALE MRNA]</scope>
    <source>
        <strain>cv. Nipponbare</strain>
    </source>
</reference>